<accession>Q5XIX8</accession>
<feature type="chain" id="PRO_0000318599" description="BLOC-1-related complex subunit 5">
    <location>
        <begin position="1"/>
        <end position="207"/>
    </location>
</feature>
<feature type="region of interest" description="Disordered" evidence="2">
    <location>
        <begin position="1"/>
        <end position="24"/>
    </location>
</feature>
<keyword id="KW-0449">Lipoprotein</keyword>
<keyword id="KW-0458">Lysosome</keyword>
<keyword id="KW-0472">Membrane</keyword>
<keyword id="KW-1185">Reference proteome</keyword>
<sequence length="207" mass="23544">MGAEQSGDADHKHSDFSASVVPSPAKHRAKMDDIVVVAQGTQSLRNIHNDPDVIKLQEIPTFQPLLKGVLSGQTSPSTVCLEKLDSAQVLQLCVRYQDHLHQCAEAVAFDQNALVKRIKEMDLSVEALFSIMQERQKRYAKYAEQIQKVNEMSMILRRIQMGIDQTVPLMERLNNMLPESLFWMLPMEHITFALDCLSYAWIRCFLA</sequence>
<evidence type="ECO:0000250" key="1">
    <source>
        <dbReference type="UniProtKB" id="Q969J3"/>
    </source>
</evidence>
<evidence type="ECO:0000256" key="2">
    <source>
        <dbReference type="SAM" id="MobiDB-lite"/>
    </source>
</evidence>
<evidence type="ECO:0000305" key="3"/>
<evidence type="ECO:0000312" key="4">
    <source>
        <dbReference type="EMBL" id="AAH83541.1"/>
    </source>
</evidence>
<proteinExistence type="evidence at transcript level"/>
<gene>
    <name evidence="1" type="primary">borcs5</name>
    <name evidence="4" type="ORF">zgc:92915</name>
</gene>
<name>BORC5_DANRE</name>
<dbReference type="EMBL" id="BC083541">
    <property type="protein sequence ID" value="AAH83541.1"/>
    <property type="molecule type" value="mRNA"/>
</dbReference>
<dbReference type="RefSeq" id="NP_001007053.1">
    <property type="nucleotide sequence ID" value="NM_001007052.2"/>
</dbReference>
<dbReference type="SMR" id="Q5XIX8"/>
<dbReference type="FunCoup" id="Q5XIX8">
    <property type="interactions" value="2522"/>
</dbReference>
<dbReference type="STRING" id="7955.ENSDARP00000087790"/>
<dbReference type="PaxDb" id="7955-ENSDARP00000087790"/>
<dbReference type="DNASU" id="449650"/>
<dbReference type="Ensembl" id="ENSDART00000093358">
    <property type="protein sequence ID" value="ENSDARP00000087790"/>
    <property type="gene ID" value="ENSDARG00000077830"/>
</dbReference>
<dbReference type="GeneID" id="449650"/>
<dbReference type="KEGG" id="dre:449650"/>
<dbReference type="AGR" id="ZFIN:ZDB-GENE-041010-83"/>
<dbReference type="CTD" id="118426"/>
<dbReference type="ZFIN" id="ZDB-GENE-041010-83">
    <property type="gene designation" value="borcs5"/>
</dbReference>
<dbReference type="eggNOG" id="KOG4515">
    <property type="taxonomic scope" value="Eukaryota"/>
</dbReference>
<dbReference type="InParanoid" id="Q5XIX8"/>
<dbReference type="OMA" id="EGRPHDP"/>
<dbReference type="OrthoDB" id="10035640at2759"/>
<dbReference type="PhylomeDB" id="Q5XIX8"/>
<dbReference type="TreeFam" id="TF316379"/>
<dbReference type="PRO" id="PR:Q5XIX8"/>
<dbReference type="Proteomes" id="UP000000437">
    <property type="component" value="Chromosome 25"/>
</dbReference>
<dbReference type="Bgee" id="ENSDARG00000077830">
    <property type="expression patterns" value="Expressed in early embryo and 25 other cell types or tissues"/>
</dbReference>
<dbReference type="ExpressionAtlas" id="Q5XIX8">
    <property type="expression patterns" value="baseline"/>
</dbReference>
<dbReference type="GO" id="GO:0099078">
    <property type="term" value="C:BORC complex"/>
    <property type="evidence" value="ECO:0000250"/>
    <property type="project" value="UniProtKB"/>
</dbReference>
<dbReference type="GO" id="GO:0098574">
    <property type="term" value="C:cytoplasmic side of lysosomal membrane"/>
    <property type="evidence" value="ECO:0000250"/>
    <property type="project" value="UniProtKB"/>
</dbReference>
<dbReference type="GO" id="GO:0016020">
    <property type="term" value="C:membrane"/>
    <property type="evidence" value="ECO:0000250"/>
    <property type="project" value="UniProtKB"/>
</dbReference>
<dbReference type="GO" id="GO:0030672">
    <property type="term" value="C:synaptic vesicle membrane"/>
    <property type="evidence" value="ECO:0000318"/>
    <property type="project" value="GO_Central"/>
</dbReference>
<dbReference type="GO" id="GO:0032418">
    <property type="term" value="P:lysosome localization"/>
    <property type="evidence" value="ECO:0000250"/>
    <property type="project" value="UniProtKB"/>
</dbReference>
<dbReference type="GO" id="GO:0072384">
    <property type="term" value="P:organelle transport along microtubule"/>
    <property type="evidence" value="ECO:0000250"/>
    <property type="project" value="UniProtKB"/>
</dbReference>
<dbReference type="GO" id="GO:1903744">
    <property type="term" value="P:positive regulation of anterograde synaptic vesicle transport"/>
    <property type="evidence" value="ECO:0000318"/>
    <property type="project" value="GO_Central"/>
</dbReference>
<dbReference type="CDD" id="cd22789">
    <property type="entry name" value="BORCS5-like"/>
    <property type="match status" value="1"/>
</dbReference>
<dbReference type="InterPro" id="IPR018780">
    <property type="entry name" value="TBORCS5"/>
</dbReference>
<dbReference type="PANTHER" id="PTHR31634">
    <property type="entry name" value="BLOC-1-RELATED COMPLEX SUBUNIT 5"/>
    <property type="match status" value="1"/>
</dbReference>
<dbReference type="PANTHER" id="PTHR31634:SF2">
    <property type="entry name" value="BLOC-1-RELATED COMPLEX SUBUNIT 5"/>
    <property type="match status" value="1"/>
</dbReference>
<dbReference type="Pfam" id="PF10158">
    <property type="entry name" value="LOH1CR12"/>
    <property type="match status" value="1"/>
</dbReference>
<reference key="1">
    <citation type="submission" date="2004-10" db="EMBL/GenBank/DDBJ databases">
        <authorList>
            <consortium name="NIH - Zebrafish Gene Collection (ZGC) project"/>
        </authorList>
    </citation>
    <scope>NUCLEOTIDE SEQUENCE [LARGE SCALE MRNA]</scope>
    <source>
        <tissue>Brain</tissue>
    </source>
</reference>
<protein>
    <recommendedName>
        <fullName evidence="3">BLOC-1-related complex subunit 5</fullName>
    </recommendedName>
</protein>
<comment type="function">
    <text evidence="1">As part of a BORC-like complex may play a role in lysosomes movement and localization at the cell periphery. Associated with the cytosolic face of lysosomes, this complex may couple lysosomes to microtubule plus-end-directed kinesin motor.</text>
</comment>
<comment type="subcellular location">
    <subcellularLocation>
        <location evidence="1">Lysosome membrane</location>
        <topology evidence="1">Lipid-anchor</topology>
        <orientation evidence="1">Cytoplasmic side</orientation>
    </subcellularLocation>
</comment>
<comment type="similarity">
    <text evidence="3">Belongs to the BORCS5 family.</text>
</comment>
<organism>
    <name type="scientific">Danio rerio</name>
    <name type="common">Zebrafish</name>
    <name type="synonym">Brachydanio rerio</name>
    <dbReference type="NCBI Taxonomy" id="7955"/>
    <lineage>
        <taxon>Eukaryota</taxon>
        <taxon>Metazoa</taxon>
        <taxon>Chordata</taxon>
        <taxon>Craniata</taxon>
        <taxon>Vertebrata</taxon>
        <taxon>Euteleostomi</taxon>
        <taxon>Actinopterygii</taxon>
        <taxon>Neopterygii</taxon>
        <taxon>Teleostei</taxon>
        <taxon>Ostariophysi</taxon>
        <taxon>Cypriniformes</taxon>
        <taxon>Danionidae</taxon>
        <taxon>Danioninae</taxon>
        <taxon>Danio</taxon>
    </lineage>
</organism>